<comment type="function">
    <text evidence="1">The central subunit of the protein translocation channel SecYEG. Consists of two halves formed by TMs 1-5 and 6-10. These two domains form a lateral gate at the front which open onto the bilayer between TMs 2 and 7, and are clamped together by SecE at the back. The channel is closed by both a pore ring composed of hydrophobic SecY resides and a short helix (helix 2A) on the extracellular side of the membrane which forms a plug. The plug probably moves laterally to allow the channel to open. The ring and the pore may move independently.</text>
</comment>
<comment type="subunit">
    <text evidence="1">Component of the Sec protein translocase complex. Heterotrimer consisting of SecY, SecE and SecG subunits. The heterotrimers can form oligomers, although 1 heterotrimer is thought to be able to translocate proteins. Interacts with the ribosome. Interacts with SecDF, and other proteins may be involved. Interacts with SecA.</text>
</comment>
<comment type="subcellular location">
    <subcellularLocation>
        <location evidence="1">Cell inner membrane</location>
        <topology evidence="1">Multi-pass membrane protein</topology>
    </subcellularLocation>
</comment>
<comment type="similarity">
    <text evidence="1">Belongs to the SecY/SEC61-alpha family.</text>
</comment>
<protein>
    <recommendedName>
        <fullName evidence="1">Protein translocase subunit SecY</fullName>
    </recommendedName>
</protein>
<proteinExistence type="inferred from homology"/>
<accession>Q9HWF5</accession>
<dbReference type="EMBL" id="AE004091">
    <property type="protein sequence ID" value="AAG07631.1"/>
    <property type="molecule type" value="Genomic_DNA"/>
</dbReference>
<dbReference type="PIR" id="A83114">
    <property type="entry name" value="A83114"/>
</dbReference>
<dbReference type="RefSeq" id="NP_252933.1">
    <property type="nucleotide sequence ID" value="NC_002516.2"/>
</dbReference>
<dbReference type="RefSeq" id="WP_003093694.1">
    <property type="nucleotide sequence ID" value="NZ_QZGE01000028.1"/>
</dbReference>
<dbReference type="SMR" id="Q9HWF5"/>
<dbReference type="FunCoup" id="Q9HWF5">
    <property type="interactions" value="624"/>
</dbReference>
<dbReference type="STRING" id="208964.PA4243"/>
<dbReference type="PaxDb" id="208964-PA4243"/>
<dbReference type="GeneID" id="77219218"/>
<dbReference type="GeneID" id="881804"/>
<dbReference type="KEGG" id="pae:PA4243"/>
<dbReference type="PATRIC" id="fig|208964.12.peg.4444"/>
<dbReference type="PseudoCAP" id="PA4243"/>
<dbReference type="HOGENOM" id="CLU_030313_0_2_6"/>
<dbReference type="InParanoid" id="Q9HWF5"/>
<dbReference type="OrthoDB" id="9809248at2"/>
<dbReference type="PhylomeDB" id="Q9HWF5"/>
<dbReference type="BioCyc" id="PAER208964:G1FZ6-4316-MONOMER"/>
<dbReference type="Proteomes" id="UP000002438">
    <property type="component" value="Chromosome"/>
</dbReference>
<dbReference type="GO" id="GO:0031522">
    <property type="term" value="C:cell envelope Sec protein transport complex"/>
    <property type="evidence" value="ECO:0000318"/>
    <property type="project" value="GO_Central"/>
</dbReference>
<dbReference type="GO" id="GO:0005886">
    <property type="term" value="C:plasma membrane"/>
    <property type="evidence" value="ECO:0000318"/>
    <property type="project" value="GO_Central"/>
</dbReference>
<dbReference type="GO" id="GO:0008320">
    <property type="term" value="F:protein transmembrane transporter activity"/>
    <property type="evidence" value="ECO:0000318"/>
    <property type="project" value="GO_Central"/>
</dbReference>
<dbReference type="GO" id="GO:0005048">
    <property type="term" value="F:signal sequence binding"/>
    <property type="evidence" value="ECO:0000318"/>
    <property type="project" value="GO_Central"/>
</dbReference>
<dbReference type="GO" id="GO:0043952">
    <property type="term" value="P:protein transport by the Sec complex"/>
    <property type="evidence" value="ECO:0007669"/>
    <property type="project" value="UniProtKB-UniRule"/>
</dbReference>
<dbReference type="GO" id="GO:0006616">
    <property type="term" value="P:SRP-dependent cotranslational protein targeting to membrane, translocation"/>
    <property type="evidence" value="ECO:0000318"/>
    <property type="project" value="GO_Central"/>
</dbReference>
<dbReference type="FunFam" id="1.10.3370.10:FF:000001">
    <property type="entry name" value="Preprotein translocase subunit SecY"/>
    <property type="match status" value="1"/>
</dbReference>
<dbReference type="Gene3D" id="1.10.3370.10">
    <property type="entry name" value="SecY subunit domain"/>
    <property type="match status" value="1"/>
</dbReference>
<dbReference type="HAMAP" id="MF_01465">
    <property type="entry name" value="SecY"/>
    <property type="match status" value="1"/>
</dbReference>
<dbReference type="InterPro" id="IPR026593">
    <property type="entry name" value="SecY"/>
</dbReference>
<dbReference type="InterPro" id="IPR002208">
    <property type="entry name" value="SecY/SEC61-alpha"/>
</dbReference>
<dbReference type="InterPro" id="IPR030659">
    <property type="entry name" value="SecY_CS"/>
</dbReference>
<dbReference type="InterPro" id="IPR023201">
    <property type="entry name" value="SecY_dom_sf"/>
</dbReference>
<dbReference type="NCBIfam" id="TIGR00967">
    <property type="entry name" value="3a0501s007"/>
    <property type="match status" value="1"/>
</dbReference>
<dbReference type="PANTHER" id="PTHR10906">
    <property type="entry name" value="SECY/SEC61-ALPHA FAMILY MEMBER"/>
    <property type="match status" value="1"/>
</dbReference>
<dbReference type="Pfam" id="PF00344">
    <property type="entry name" value="SecY"/>
    <property type="match status" value="1"/>
</dbReference>
<dbReference type="PIRSF" id="PIRSF004557">
    <property type="entry name" value="SecY"/>
    <property type="match status" value="1"/>
</dbReference>
<dbReference type="PRINTS" id="PR00303">
    <property type="entry name" value="SECYTRNLCASE"/>
</dbReference>
<dbReference type="SUPFAM" id="SSF103491">
    <property type="entry name" value="Preprotein translocase SecY subunit"/>
    <property type="match status" value="1"/>
</dbReference>
<dbReference type="PROSITE" id="PS00755">
    <property type="entry name" value="SECY_1"/>
    <property type="match status" value="1"/>
</dbReference>
<organism>
    <name type="scientific">Pseudomonas aeruginosa (strain ATCC 15692 / DSM 22644 / CIP 104116 / JCM 14847 / LMG 12228 / 1C / PRS 101 / PAO1)</name>
    <dbReference type="NCBI Taxonomy" id="208964"/>
    <lineage>
        <taxon>Bacteria</taxon>
        <taxon>Pseudomonadati</taxon>
        <taxon>Pseudomonadota</taxon>
        <taxon>Gammaproteobacteria</taxon>
        <taxon>Pseudomonadales</taxon>
        <taxon>Pseudomonadaceae</taxon>
        <taxon>Pseudomonas</taxon>
    </lineage>
</organism>
<sequence>MAKQGALSALSNGGLSELWARLRFLFLAIIVYRIGAHIPVPGINPDRLAALFRQNEGTILSLFNMFSGGALERMSIFALGIMPYISASIIMQLMTAISPQLEQLKKEGESGRRKISQYTRYGTVVLALVQAIGMSVGLGSQGVAFSNDFGFYFVAVTTFVAGAMFMMWLGEQITERGVGNGISMLIFAGIVAGLPRAIGQSFESARQGDINIFALIGVGLLAVAIIAFVVFIERGQRRIAVHYAKRQQGRKVFAAQTSHLPLKVNMAGVIPAIFASSILLFPASLGSWFGQSEGLGWLQDVAQAIAPGQPLNILLFTAGIVFFCFFYTALMFNPKDVAENLKKSGAFIPGIRPGEQSARYIDGVLTRLTMFGALYMTAVCLLPQFLVVAAHVPFYLGGTSLLIVVVVVMDFMAQVQSHLVSHQYESLMKKANLKGYGSGMLR</sequence>
<keyword id="KW-0997">Cell inner membrane</keyword>
<keyword id="KW-1003">Cell membrane</keyword>
<keyword id="KW-0472">Membrane</keyword>
<keyword id="KW-0653">Protein transport</keyword>
<keyword id="KW-1185">Reference proteome</keyword>
<keyword id="KW-0811">Translocation</keyword>
<keyword id="KW-0812">Transmembrane</keyword>
<keyword id="KW-1133">Transmembrane helix</keyword>
<keyword id="KW-0813">Transport</keyword>
<reference key="1">
    <citation type="journal article" date="2000" name="Nature">
        <title>Complete genome sequence of Pseudomonas aeruginosa PAO1, an opportunistic pathogen.</title>
        <authorList>
            <person name="Stover C.K."/>
            <person name="Pham X.-Q.T."/>
            <person name="Erwin A.L."/>
            <person name="Mizoguchi S.D."/>
            <person name="Warrener P."/>
            <person name="Hickey M.J."/>
            <person name="Brinkman F.S.L."/>
            <person name="Hufnagle W.O."/>
            <person name="Kowalik D.J."/>
            <person name="Lagrou M."/>
            <person name="Garber R.L."/>
            <person name="Goltry L."/>
            <person name="Tolentino E."/>
            <person name="Westbrock-Wadman S."/>
            <person name="Yuan Y."/>
            <person name="Brody L.L."/>
            <person name="Coulter S.N."/>
            <person name="Folger K.R."/>
            <person name="Kas A."/>
            <person name="Larbig K."/>
            <person name="Lim R.M."/>
            <person name="Smith K.A."/>
            <person name="Spencer D.H."/>
            <person name="Wong G.K.-S."/>
            <person name="Wu Z."/>
            <person name="Paulsen I.T."/>
            <person name="Reizer J."/>
            <person name="Saier M.H. Jr."/>
            <person name="Hancock R.E.W."/>
            <person name="Lory S."/>
            <person name="Olson M.V."/>
        </authorList>
    </citation>
    <scope>NUCLEOTIDE SEQUENCE [LARGE SCALE GENOMIC DNA]</scope>
    <source>
        <strain>ATCC 15692 / DSM 22644 / CIP 104116 / JCM 14847 / LMG 12228 / 1C / PRS 101 / PAO1</strain>
    </source>
</reference>
<gene>
    <name evidence="1" type="primary">secY</name>
    <name type="ordered locus">PA4243</name>
</gene>
<evidence type="ECO:0000255" key="1">
    <source>
        <dbReference type="HAMAP-Rule" id="MF_01465"/>
    </source>
</evidence>
<feature type="chain" id="PRO_0000287815" description="Protein translocase subunit SecY">
    <location>
        <begin position="1"/>
        <end position="442"/>
    </location>
</feature>
<feature type="transmembrane region" description="Helical" evidence="1">
    <location>
        <begin position="24"/>
        <end position="44"/>
    </location>
</feature>
<feature type="transmembrane region" description="Helical" evidence="1">
    <location>
        <begin position="76"/>
        <end position="96"/>
    </location>
</feature>
<feature type="transmembrane region" description="Helical" evidence="1">
    <location>
        <begin position="125"/>
        <end position="145"/>
    </location>
</feature>
<feature type="transmembrane region" description="Helical" evidence="1">
    <location>
        <begin position="149"/>
        <end position="169"/>
    </location>
</feature>
<feature type="transmembrane region" description="Helical" evidence="1">
    <location>
        <begin position="178"/>
        <end position="198"/>
    </location>
</feature>
<feature type="transmembrane region" description="Helical" evidence="1">
    <location>
        <begin position="212"/>
        <end position="232"/>
    </location>
</feature>
<feature type="transmembrane region" description="Helical" evidence="1">
    <location>
        <begin position="269"/>
        <end position="289"/>
    </location>
</feature>
<feature type="transmembrane region" description="Helical" evidence="1">
    <location>
        <begin position="312"/>
        <end position="332"/>
    </location>
</feature>
<feature type="transmembrane region" description="Helical" evidence="1">
    <location>
        <begin position="363"/>
        <end position="383"/>
    </location>
</feature>
<feature type="transmembrane region" description="Helical" evidence="1">
    <location>
        <begin position="385"/>
        <end position="405"/>
    </location>
</feature>
<name>SECY_PSEAE</name>